<proteinExistence type="evidence at protein level"/>
<dbReference type="EC" id="3.4.21.105" evidence="2"/>
<dbReference type="EMBL" id="AK151652">
    <property type="protein sequence ID" value="BAE30581.1"/>
    <property type="molecule type" value="mRNA"/>
</dbReference>
<dbReference type="EMBL" id="BC083153">
    <property type="protein sequence ID" value="AAH83153.1"/>
    <property type="molecule type" value="mRNA"/>
</dbReference>
<dbReference type="CCDS" id="CCDS28044.1"/>
<dbReference type="RefSeq" id="NP_001005767.1">
    <property type="nucleotide sequence ID" value="NM_001005767.5"/>
</dbReference>
<dbReference type="SMR" id="Q5XJY4"/>
<dbReference type="BioGRID" id="237750">
    <property type="interactions" value="1"/>
</dbReference>
<dbReference type="DIP" id="DIP-59825N"/>
<dbReference type="FunCoup" id="Q5XJY4">
    <property type="interactions" value="4520"/>
</dbReference>
<dbReference type="IntAct" id="Q5XJY4">
    <property type="interactions" value="2"/>
</dbReference>
<dbReference type="STRING" id="10090.ENSMUSP00000045361"/>
<dbReference type="ChEMBL" id="CHEMBL3259502"/>
<dbReference type="PhosphoSitePlus" id="Q5XJY4"/>
<dbReference type="jPOST" id="Q5XJY4"/>
<dbReference type="PaxDb" id="10090-ENSMUSP00000045361"/>
<dbReference type="ProteomicsDB" id="294014"/>
<dbReference type="Pumba" id="Q5XJY4"/>
<dbReference type="DNASU" id="381038"/>
<dbReference type="Ensembl" id="ENSMUST00000048642.15">
    <property type="protein sequence ID" value="ENSMUSP00000045361.9"/>
    <property type="gene ID" value="ENSMUSG00000033918.17"/>
</dbReference>
<dbReference type="GeneID" id="381038"/>
<dbReference type="KEGG" id="mmu:381038"/>
<dbReference type="UCSC" id="uc007ypm.1">
    <property type="organism name" value="mouse"/>
</dbReference>
<dbReference type="AGR" id="MGI:1277152"/>
<dbReference type="CTD" id="55486"/>
<dbReference type="MGI" id="MGI:1277152">
    <property type="gene designation" value="Parl"/>
</dbReference>
<dbReference type="VEuPathDB" id="HostDB:ENSMUSG00000033918"/>
<dbReference type="eggNOG" id="KOG2980">
    <property type="taxonomic scope" value="Eukaryota"/>
</dbReference>
<dbReference type="GeneTree" id="ENSGT00390000013063"/>
<dbReference type="HOGENOM" id="CLU_034022_0_1_1"/>
<dbReference type="InParanoid" id="Q5XJY4"/>
<dbReference type="OMA" id="WVKQELW"/>
<dbReference type="OrthoDB" id="10260614at2759"/>
<dbReference type="PhylomeDB" id="Q5XJY4"/>
<dbReference type="TreeFam" id="TF313603"/>
<dbReference type="Reactome" id="R-MMU-8949664">
    <property type="pathway name" value="Processing of SMDT1"/>
</dbReference>
<dbReference type="BioGRID-ORCS" id="381038">
    <property type="hits" value="4 hits in 77 CRISPR screens"/>
</dbReference>
<dbReference type="ChiTaRS" id="Parl">
    <property type="organism name" value="mouse"/>
</dbReference>
<dbReference type="PRO" id="PR:Q5XJY4"/>
<dbReference type="Proteomes" id="UP000000589">
    <property type="component" value="Chromosome 16"/>
</dbReference>
<dbReference type="RNAct" id="Q5XJY4">
    <property type="molecule type" value="protein"/>
</dbReference>
<dbReference type="Bgee" id="ENSMUSG00000033918">
    <property type="expression patterns" value="Expressed in primary oocyte and 125 other cell types or tissues"/>
</dbReference>
<dbReference type="ExpressionAtlas" id="Q5XJY4">
    <property type="expression patterns" value="baseline and differential"/>
</dbReference>
<dbReference type="GO" id="GO:0005743">
    <property type="term" value="C:mitochondrial inner membrane"/>
    <property type="evidence" value="ECO:0000315"/>
    <property type="project" value="UniProtKB"/>
</dbReference>
<dbReference type="GO" id="GO:0005739">
    <property type="term" value="C:mitochondrion"/>
    <property type="evidence" value="ECO:0007005"/>
    <property type="project" value="MGI"/>
</dbReference>
<dbReference type="GO" id="GO:0005634">
    <property type="term" value="C:nucleus"/>
    <property type="evidence" value="ECO:0007669"/>
    <property type="project" value="UniProtKB-SubCell"/>
</dbReference>
<dbReference type="GO" id="GO:0004175">
    <property type="term" value="F:endopeptidase activity"/>
    <property type="evidence" value="ECO:0000315"/>
    <property type="project" value="ParkinsonsUK-UCL"/>
</dbReference>
<dbReference type="GO" id="GO:0004252">
    <property type="term" value="F:serine-type endopeptidase activity"/>
    <property type="evidence" value="ECO:0000250"/>
    <property type="project" value="UniProtKB"/>
</dbReference>
<dbReference type="GO" id="GO:0033619">
    <property type="term" value="P:membrane protein proteolysis"/>
    <property type="evidence" value="ECO:0007669"/>
    <property type="project" value="Ensembl"/>
</dbReference>
<dbReference type="GO" id="GO:0008053">
    <property type="term" value="P:mitochondrial fusion"/>
    <property type="evidence" value="ECO:0000315"/>
    <property type="project" value="UniProtKB"/>
</dbReference>
<dbReference type="GO" id="GO:2001243">
    <property type="term" value="P:negative regulation of intrinsic apoptotic signaling pathway"/>
    <property type="evidence" value="ECO:0000315"/>
    <property type="project" value="UniProtKB"/>
</dbReference>
<dbReference type="GO" id="GO:0090201">
    <property type="term" value="P:negative regulation of release of cytochrome c from mitochondria"/>
    <property type="evidence" value="ECO:0000315"/>
    <property type="project" value="UniProtKB"/>
</dbReference>
<dbReference type="GO" id="GO:0016485">
    <property type="term" value="P:protein processing"/>
    <property type="evidence" value="ECO:0000315"/>
    <property type="project" value="MGI"/>
</dbReference>
<dbReference type="GO" id="GO:0006508">
    <property type="term" value="P:proteolysis"/>
    <property type="evidence" value="ECO:0000315"/>
    <property type="project" value="ParkinsonsUK-UCL"/>
</dbReference>
<dbReference type="GO" id="GO:1901524">
    <property type="term" value="P:regulation of mitophagy"/>
    <property type="evidence" value="ECO:0000315"/>
    <property type="project" value="ParkinsonsUK-UCL"/>
</dbReference>
<dbReference type="GO" id="GO:1903214">
    <property type="term" value="P:regulation of protein targeting to mitochondrion"/>
    <property type="evidence" value="ECO:0007669"/>
    <property type="project" value="Ensembl"/>
</dbReference>
<dbReference type="GO" id="GO:0030162">
    <property type="term" value="P:regulation of proteolysis"/>
    <property type="evidence" value="ECO:0007669"/>
    <property type="project" value="Ensembl"/>
</dbReference>
<dbReference type="GO" id="GO:2000377">
    <property type="term" value="P:regulation of reactive oxygen species metabolic process"/>
    <property type="evidence" value="ECO:0007669"/>
    <property type="project" value="Ensembl"/>
</dbReference>
<dbReference type="FunFam" id="1.20.1540.10:FF:000005">
    <property type="entry name" value="Presenilins-associated rhomboid-like protein, mitochondrial"/>
    <property type="match status" value="1"/>
</dbReference>
<dbReference type="Gene3D" id="1.20.1540.10">
    <property type="entry name" value="Rhomboid-like"/>
    <property type="match status" value="1"/>
</dbReference>
<dbReference type="InterPro" id="IPR022764">
    <property type="entry name" value="Peptidase_S54_rhomboid_dom"/>
</dbReference>
<dbReference type="InterPro" id="IPR035952">
    <property type="entry name" value="Rhomboid-like_sf"/>
</dbReference>
<dbReference type="InterPro" id="IPR050925">
    <property type="entry name" value="Rhomboid_protease_S54"/>
</dbReference>
<dbReference type="PANTHER" id="PTHR43731:SF14">
    <property type="entry name" value="PRESENILIN-ASSOCIATED RHOMBOID-LIKE PROTEIN, MITOCHONDRIAL"/>
    <property type="match status" value="1"/>
</dbReference>
<dbReference type="PANTHER" id="PTHR43731">
    <property type="entry name" value="RHOMBOID PROTEASE"/>
    <property type="match status" value="1"/>
</dbReference>
<dbReference type="Pfam" id="PF01694">
    <property type="entry name" value="Rhomboid"/>
    <property type="match status" value="1"/>
</dbReference>
<dbReference type="SUPFAM" id="SSF144091">
    <property type="entry name" value="Rhomboid-like"/>
    <property type="match status" value="1"/>
</dbReference>
<feature type="transit peptide" description="Mitochondrion" evidence="1">
    <location>
        <begin position="1"/>
        <end position="50"/>
    </location>
</feature>
<feature type="chain" id="PRO_0000027388" description="Presenilin-associated rhomboid-like protein, mitochondrial">
    <location>
        <begin position="51"/>
        <end position="377"/>
    </location>
</feature>
<feature type="peptide" id="PRO_0000027389" description="P-beta" evidence="1">
    <location>
        <begin position="51"/>
        <end position="75"/>
    </location>
</feature>
<feature type="topological domain" description="Mitochondrial matrix" evidence="3">
    <location>
        <begin position="51"/>
        <end position="99"/>
    </location>
</feature>
<feature type="transmembrane region" description="Helical" evidence="3">
    <location>
        <begin position="100"/>
        <end position="119"/>
    </location>
</feature>
<feature type="topological domain" description="Mitochondrial intermembrane" evidence="3">
    <location>
        <begin position="120"/>
        <end position="165"/>
    </location>
</feature>
<feature type="transmembrane region" description="Helical" evidence="3">
    <location>
        <begin position="166"/>
        <end position="185"/>
    </location>
</feature>
<feature type="topological domain" description="Mitochondrial matrix" evidence="3">
    <location>
        <begin position="186"/>
        <end position="205"/>
    </location>
</feature>
<feature type="transmembrane region" description="Helical" evidence="3">
    <location>
        <begin position="206"/>
        <end position="228"/>
    </location>
</feature>
<feature type="topological domain" description="Mitochondrial intermembrane" evidence="3">
    <location>
        <begin position="229"/>
        <end position="242"/>
    </location>
</feature>
<feature type="transmembrane region" description="Helical" evidence="3">
    <location>
        <begin position="243"/>
        <end position="260"/>
    </location>
</feature>
<feature type="topological domain" description="Mitochondrial matrix" evidence="3">
    <location>
        <begin position="261"/>
        <end position="270"/>
    </location>
</feature>
<feature type="transmembrane region" description="Helical" evidence="3">
    <location>
        <begin position="271"/>
        <end position="287"/>
    </location>
</feature>
<feature type="topological domain" description="Mitochondrial intermembrane" evidence="3">
    <location>
        <begin position="288"/>
        <end position="293"/>
    </location>
</feature>
<feature type="transmembrane region" description="Helical" evidence="3">
    <location>
        <begin position="294"/>
        <end position="316"/>
    </location>
</feature>
<feature type="topological domain" description="Mitochondrial matrix" evidence="3">
    <location>
        <begin position="317"/>
        <end position="330"/>
    </location>
</feature>
<feature type="transmembrane region" description="Helical" evidence="3">
    <location>
        <begin position="331"/>
        <end position="352"/>
    </location>
</feature>
<feature type="topological domain" description="Mitochondrial intermembrane" evidence="3">
    <location>
        <begin position="353"/>
        <end position="377"/>
    </location>
</feature>
<feature type="active site" description="Nucleophile" evidence="1">
    <location>
        <position position="275"/>
    </location>
</feature>
<feature type="active site" evidence="1">
    <location>
        <position position="333"/>
    </location>
</feature>
<feature type="modified residue" description="Phosphoserine" evidence="2">
    <location>
        <position position="63"/>
    </location>
</feature>
<feature type="modified residue" description="Phosphoserine" evidence="2">
    <location>
        <position position="68"/>
    </location>
</feature>
<organism>
    <name type="scientific">Mus musculus</name>
    <name type="common">Mouse</name>
    <dbReference type="NCBI Taxonomy" id="10090"/>
    <lineage>
        <taxon>Eukaryota</taxon>
        <taxon>Metazoa</taxon>
        <taxon>Chordata</taxon>
        <taxon>Craniata</taxon>
        <taxon>Vertebrata</taxon>
        <taxon>Euteleostomi</taxon>
        <taxon>Mammalia</taxon>
        <taxon>Eutheria</taxon>
        <taxon>Euarchontoglires</taxon>
        <taxon>Glires</taxon>
        <taxon>Rodentia</taxon>
        <taxon>Myomorpha</taxon>
        <taxon>Muroidea</taxon>
        <taxon>Muridae</taxon>
        <taxon>Murinae</taxon>
        <taxon>Mus</taxon>
        <taxon>Mus</taxon>
    </lineage>
</organism>
<evidence type="ECO:0000250" key="1"/>
<evidence type="ECO:0000250" key="2">
    <source>
        <dbReference type="UniProtKB" id="Q9H300"/>
    </source>
</evidence>
<evidence type="ECO:0000255" key="3"/>
<evidence type="ECO:0000269" key="4">
    <source>
    </source>
</evidence>
<evidence type="ECO:0000305" key="5"/>
<comment type="function">
    <text evidence="2 4">Required for the control of apoptosis during postnatal growth (PubMed:16839884). Essential for proteolytic processing of an antiapoptotic form of OPA1 which prevents the release of mitochondrial cytochrome c in response to intrinsic apoptotic signals (PubMed:16839884). Required for the maturation of PINK1 into its 52kDa mature form after its cleavage by mitochondrial-processing peptidase (MPP) (By similarity). Promotes cleavage of serine/threonine-protein phosphatase PGAM5 in damaged mitochondria in response to loss of mitochondrial membrane potential (By similarity). Mediates differential cleavage of PINK1 and PGAM5 depending on the health status of mitochondria, disassociating from PINK1 and associating with PGAM5 in response to mitochondrial membrane potential loss (By similarity). Required for processing of CLPB into a form with higher protein disaggregase activity by removing an autoinhibitory N-terminal peptide (By similarity). Promotes processing of DIABLO/SMAC in the mitochondrion which is required for DIABLO apoptotic activity (By similarity). Also required for cleavage of STARD7 and TTC19 (By similarity). Promotes changes in mitochondria morphology regulated by phosphorylation of P-beta domain (By similarity).</text>
</comment>
<comment type="catalytic activity">
    <reaction evidence="2">
        <text>Cleaves type-1 transmembrane domains using a catalytic dyad composed of serine and histidine that are contributed by different transmembrane domains.</text>
        <dbReference type="EC" id="3.4.21.105"/>
    </reaction>
</comment>
<comment type="subunit">
    <text evidence="1 4">Interacts with PSEN1 and PSEN2 (By similarity). Binds OPA1.</text>
</comment>
<comment type="interaction">
    <interactant intactId="EBI-5395457">
        <id>Q5XJY4</id>
    </interactant>
    <interactant intactId="EBI-642449">
        <id>O35387</id>
        <label>Hax1</label>
    </interactant>
    <organismsDiffer>false</organismsDiffer>
    <experiments>2</experiments>
</comment>
<comment type="subcellular location">
    <subcellularLocation>
        <location evidence="4">Mitochondrion inner membrane</location>
        <topology evidence="2">Multi-pass membrane protein</topology>
    </subcellularLocation>
</comment>
<comment type="subcellular location">
    <molecule>P-beta</molecule>
    <subcellularLocation>
        <location evidence="2">Nucleus</location>
    </subcellularLocation>
    <text evidence="2">Translocated into the nucleus by an unknown mechanism (By similarity).</text>
</comment>
<comment type="PTM">
    <text evidence="1">P-beta is proteolytically processed (beta-cleavage) in a PARL-dependent manner.</text>
</comment>
<comment type="disruption phenotype">
    <text evidence="4">Mice develop normally until 4 weeks of age. They show subsequent progressive growth retardation, atrophy of muscle, spleen, and thymus as well as severe apoptosis of T and B lymphocytes leading to premature death between 8-12 weeks of age. Mouse embryonic fibroblasts lacking Parl show high susceptibility to intrinsic apoptotic signals. This defect can be complemented by Parl or a soluble form of Opa1.</text>
</comment>
<comment type="similarity">
    <text evidence="5">Belongs to the peptidase S54 family.</text>
</comment>
<sequence length="377" mass="41964">MALQGWVQRGWRCGPAWAPPLGGGYRELSATQAPRLLGRRFNLFVQQKCGFRKAPRKVEPRRSDTGSSGEAYKRSALIPPLEETVFYPSPYPIRTLVKPFFFTIGFTGCAFGSAAIWQYESLKSRVQSYFDGIKADWLDSIRPQKEGNLRKEINKWWNSLSDGQRTVTGIIAANALVFCLWRVPSLQRTMIRYFTSNPASKVLCSPMLLSTFSHFSLFHMAANMYVLWSFSSSIVNILGQEQFVAVYLSAGVISNFVSYVCKVATGRYGPSLGASGAIMTVLAAVCTKIPEGRLAIIFLPVFTFTAGNALKAIIAMDTAGMILGWKFFDHAAHLGGALFGIWYITYGHELIWKNREPLVKIWHEIRTNGPKKGGGSK</sequence>
<accession>Q5XJY4</accession>
<accession>Q3U9T5</accession>
<accession>Q641T5</accession>
<gene>
    <name type="primary">Parl</name>
    <name type="synonym">Psarl</name>
</gene>
<protein>
    <recommendedName>
        <fullName>Presenilin-associated rhomboid-like protein, mitochondrial</fullName>
        <ecNumber evidence="2">3.4.21.105</ecNumber>
    </recommendedName>
    <alternativeName>
        <fullName>Mitochondrial intramembrane-cleaving protease PARL</fullName>
    </alternativeName>
    <component>
        <recommendedName>
            <fullName>P-beta</fullName>
            <shortName>Pbeta</shortName>
        </recommendedName>
    </component>
</protein>
<reference key="1">
    <citation type="journal article" date="2005" name="Science">
        <title>The transcriptional landscape of the mammalian genome.</title>
        <authorList>
            <person name="Carninci P."/>
            <person name="Kasukawa T."/>
            <person name="Katayama S."/>
            <person name="Gough J."/>
            <person name="Frith M.C."/>
            <person name="Maeda N."/>
            <person name="Oyama R."/>
            <person name="Ravasi T."/>
            <person name="Lenhard B."/>
            <person name="Wells C."/>
            <person name="Kodzius R."/>
            <person name="Shimokawa K."/>
            <person name="Bajic V.B."/>
            <person name="Brenner S.E."/>
            <person name="Batalov S."/>
            <person name="Forrest A.R."/>
            <person name="Zavolan M."/>
            <person name="Davis M.J."/>
            <person name="Wilming L.G."/>
            <person name="Aidinis V."/>
            <person name="Allen J.E."/>
            <person name="Ambesi-Impiombato A."/>
            <person name="Apweiler R."/>
            <person name="Aturaliya R.N."/>
            <person name="Bailey T.L."/>
            <person name="Bansal M."/>
            <person name="Baxter L."/>
            <person name="Beisel K.W."/>
            <person name="Bersano T."/>
            <person name="Bono H."/>
            <person name="Chalk A.M."/>
            <person name="Chiu K.P."/>
            <person name="Choudhary V."/>
            <person name="Christoffels A."/>
            <person name="Clutterbuck D.R."/>
            <person name="Crowe M.L."/>
            <person name="Dalla E."/>
            <person name="Dalrymple B.P."/>
            <person name="de Bono B."/>
            <person name="Della Gatta G."/>
            <person name="di Bernardo D."/>
            <person name="Down T."/>
            <person name="Engstrom P."/>
            <person name="Fagiolini M."/>
            <person name="Faulkner G."/>
            <person name="Fletcher C.F."/>
            <person name="Fukushima T."/>
            <person name="Furuno M."/>
            <person name="Futaki S."/>
            <person name="Gariboldi M."/>
            <person name="Georgii-Hemming P."/>
            <person name="Gingeras T.R."/>
            <person name="Gojobori T."/>
            <person name="Green R.E."/>
            <person name="Gustincich S."/>
            <person name="Harbers M."/>
            <person name="Hayashi Y."/>
            <person name="Hensch T.K."/>
            <person name="Hirokawa N."/>
            <person name="Hill D."/>
            <person name="Huminiecki L."/>
            <person name="Iacono M."/>
            <person name="Ikeo K."/>
            <person name="Iwama A."/>
            <person name="Ishikawa T."/>
            <person name="Jakt M."/>
            <person name="Kanapin A."/>
            <person name="Katoh M."/>
            <person name="Kawasawa Y."/>
            <person name="Kelso J."/>
            <person name="Kitamura H."/>
            <person name="Kitano H."/>
            <person name="Kollias G."/>
            <person name="Krishnan S.P."/>
            <person name="Kruger A."/>
            <person name="Kummerfeld S.K."/>
            <person name="Kurochkin I.V."/>
            <person name="Lareau L.F."/>
            <person name="Lazarevic D."/>
            <person name="Lipovich L."/>
            <person name="Liu J."/>
            <person name="Liuni S."/>
            <person name="McWilliam S."/>
            <person name="Madan Babu M."/>
            <person name="Madera M."/>
            <person name="Marchionni L."/>
            <person name="Matsuda H."/>
            <person name="Matsuzawa S."/>
            <person name="Miki H."/>
            <person name="Mignone F."/>
            <person name="Miyake S."/>
            <person name="Morris K."/>
            <person name="Mottagui-Tabar S."/>
            <person name="Mulder N."/>
            <person name="Nakano N."/>
            <person name="Nakauchi H."/>
            <person name="Ng P."/>
            <person name="Nilsson R."/>
            <person name="Nishiguchi S."/>
            <person name="Nishikawa S."/>
            <person name="Nori F."/>
            <person name="Ohara O."/>
            <person name="Okazaki Y."/>
            <person name="Orlando V."/>
            <person name="Pang K.C."/>
            <person name="Pavan W.J."/>
            <person name="Pavesi G."/>
            <person name="Pesole G."/>
            <person name="Petrovsky N."/>
            <person name="Piazza S."/>
            <person name="Reed J."/>
            <person name="Reid J.F."/>
            <person name="Ring B.Z."/>
            <person name="Ringwald M."/>
            <person name="Rost B."/>
            <person name="Ruan Y."/>
            <person name="Salzberg S.L."/>
            <person name="Sandelin A."/>
            <person name="Schneider C."/>
            <person name="Schoenbach C."/>
            <person name="Sekiguchi K."/>
            <person name="Semple C.A."/>
            <person name="Seno S."/>
            <person name="Sessa L."/>
            <person name="Sheng Y."/>
            <person name="Shibata Y."/>
            <person name="Shimada H."/>
            <person name="Shimada K."/>
            <person name="Silva D."/>
            <person name="Sinclair B."/>
            <person name="Sperling S."/>
            <person name="Stupka E."/>
            <person name="Sugiura K."/>
            <person name="Sultana R."/>
            <person name="Takenaka Y."/>
            <person name="Taki K."/>
            <person name="Tammoja K."/>
            <person name="Tan S.L."/>
            <person name="Tang S."/>
            <person name="Taylor M.S."/>
            <person name="Tegner J."/>
            <person name="Teichmann S.A."/>
            <person name="Ueda H.R."/>
            <person name="van Nimwegen E."/>
            <person name="Verardo R."/>
            <person name="Wei C.L."/>
            <person name="Yagi K."/>
            <person name="Yamanishi H."/>
            <person name="Zabarovsky E."/>
            <person name="Zhu S."/>
            <person name="Zimmer A."/>
            <person name="Hide W."/>
            <person name="Bult C."/>
            <person name="Grimmond S.M."/>
            <person name="Teasdale R.D."/>
            <person name="Liu E.T."/>
            <person name="Brusic V."/>
            <person name="Quackenbush J."/>
            <person name="Wahlestedt C."/>
            <person name="Mattick J.S."/>
            <person name="Hume D.A."/>
            <person name="Kai C."/>
            <person name="Sasaki D."/>
            <person name="Tomaru Y."/>
            <person name="Fukuda S."/>
            <person name="Kanamori-Katayama M."/>
            <person name="Suzuki M."/>
            <person name="Aoki J."/>
            <person name="Arakawa T."/>
            <person name="Iida J."/>
            <person name="Imamura K."/>
            <person name="Itoh M."/>
            <person name="Kato T."/>
            <person name="Kawaji H."/>
            <person name="Kawagashira N."/>
            <person name="Kawashima T."/>
            <person name="Kojima M."/>
            <person name="Kondo S."/>
            <person name="Konno H."/>
            <person name="Nakano K."/>
            <person name="Ninomiya N."/>
            <person name="Nishio T."/>
            <person name="Okada M."/>
            <person name="Plessy C."/>
            <person name="Shibata K."/>
            <person name="Shiraki T."/>
            <person name="Suzuki S."/>
            <person name="Tagami M."/>
            <person name="Waki K."/>
            <person name="Watahiki A."/>
            <person name="Okamura-Oho Y."/>
            <person name="Suzuki H."/>
            <person name="Kawai J."/>
            <person name="Hayashizaki Y."/>
        </authorList>
    </citation>
    <scope>NUCLEOTIDE SEQUENCE [LARGE SCALE MRNA]</scope>
    <source>
        <strain>C57BL/6J</strain>
        <tissue>Bone marrow</tissue>
    </source>
</reference>
<reference key="2">
    <citation type="journal article" date="2004" name="Genome Res.">
        <title>The status, quality, and expansion of the NIH full-length cDNA project: the Mammalian Gene Collection (MGC).</title>
        <authorList>
            <consortium name="The MGC Project Team"/>
        </authorList>
    </citation>
    <scope>NUCLEOTIDE SEQUENCE [LARGE SCALE MRNA]</scope>
    <source>
        <tissue>Embryonic stem cell</tissue>
    </source>
</reference>
<reference key="3">
    <citation type="journal article" date="2006" name="Cell">
        <title>Mitochondrial rhomboid PARL regulates cytochrome c release during apoptosis via OPA1-dependent cristae remodeling.</title>
        <authorList>
            <person name="Cipolat S."/>
            <person name="Rudka T."/>
            <person name="Hartmann D."/>
            <person name="Costa V."/>
            <person name="Serneels L."/>
            <person name="Craessaerts K."/>
            <person name="Metzger K."/>
            <person name="Frezza C."/>
            <person name="Annaert W."/>
            <person name="D'Adamio L."/>
            <person name="Derks C."/>
            <person name="Dejaegere T."/>
            <person name="Pellegrini L."/>
            <person name="D'Hooge R."/>
            <person name="Scorrano L."/>
            <person name="De Strooper B."/>
        </authorList>
    </citation>
    <scope>FUNCTION</scope>
    <scope>SUBCELLULAR LOCATION</scope>
    <scope>INTERACTION WITH OPA</scope>
    <scope>DISRUPTION PHENOTYPE</scope>
</reference>
<reference key="4">
    <citation type="journal article" date="2010" name="Cell">
        <title>A tissue-specific atlas of mouse protein phosphorylation and expression.</title>
        <authorList>
            <person name="Huttlin E.L."/>
            <person name="Jedrychowski M.P."/>
            <person name="Elias J.E."/>
            <person name="Goswami T."/>
            <person name="Rad R."/>
            <person name="Beausoleil S.A."/>
            <person name="Villen J."/>
            <person name="Haas W."/>
            <person name="Sowa M.E."/>
            <person name="Gygi S.P."/>
        </authorList>
    </citation>
    <scope>IDENTIFICATION BY MASS SPECTROMETRY [LARGE SCALE ANALYSIS]</scope>
    <source>
        <tissue>Brown adipose tissue</tissue>
    </source>
</reference>
<name>PARL_MOUSE</name>
<keyword id="KW-0378">Hydrolase</keyword>
<keyword id="KW-0472">Membrane</keyword>
<keyword id="KW-0496">Mitochondrion</keyword>
<keyword id="KW-0999">Mitochondrion inner membrane</keyword>
<keyword id="KW-0539">Nucleus</keyword>
<keyword id="KW-0597">Phosphoprotein</keyword>
<keyword id="KW-0645">Protease</keyword>
<keyword id="KW-1185">Reference proteome</keyword>
<keyword id="KW-0720">Serine protease</keyword>
<keyword id="KW-0809">Transit peptide</keyword>
<keyword id="KW-0812">Transmembrane</keyword>
<keyword id="KW-1133">Transmembrane helix</keyword>